<comment type="function">
    <text evidence="1">Forms part of the ribosomal stalk which helps the ribosome interact with GTP-bound translation factors. Is thus essential for accurate translation.</text>
</comment>
<comment type="subunit">
    <text evidence="1">Homodimer. Part of the ribosomal stalk of the 50S ribosomal subunit. Forms a multimeric L10(L12)X complex, where L10 forms an elongated spine to which 2 to 4 L12 dimers bind in a sequential fashion. Binds GTP-bound translation factors.</text>
</comment>
<comment type="similarity">
    <text evidence="1">Belongs to the bacterial ribosomal protein bL12 family.</text>
</comment>
<reference key="1">
    <citation type="submission" date="2008-06" db="EMBL/GenBank/DDBJ databases">
        <title>Complete sequence of Chloroherpeton thalassium ATCC 35110.</title>
        <authorList>
            <consortium name="US DOE Joint Genome Institute"/>
            <person name="Lucas S."/>
            <person name="Copeland A."/>
            <person name="Lapidus A."/>
            <person name="Glavina del Rio T."/>
            <person name="Dalin E."/>
            <person name="Tice H."/>
            <person name="Bruce D."/>
            <person name="Goodwin L."/>
            <person name="Pitluck S."/>
            <person name="Schmutz J."/>
            <person name="Larimer F."/>
            <person name="Land M."/>
            <person name="Hauser L."/>
            <person name="Kyrpides N."/>
            <person name="Mikhailova N."/>
            <person name="Liu Z."/>
            <person name="Li T."/>
            <person name="Zhao F."/>
            <person name="Overmann J."/>
            <person name="Bryant D.A."/>
            <person name="Richardson P."/>
        </authorList>
    </citation>
    <scope>NUCLEOTIDE SEQUENCE [LARGE SCALE GENOMIC DNA]</scope>
    <source>
        <strain>ATCC 35110 / GB-78</strain>
    </source>
</reference>
<dbReference type="EMBL" id="CP001100">
    <property type="protein sequence ID" value="ACF13641.1"/>
    <property type="molecule type" value="Genomic_DNA"/>
</dbReference>
<dbReference type="RefSeq" id="WP_012499725.1">
    <property type="nucleotide sequence ID" value="NC_011026.1"/>
</dbReference>
<dbReference type="SMR" id="B3QYL3"/>
<dbReference type="STRING" id="517418.Ctha_1177"/>
<dbReference type="KEGG" id="cts:Ctha_1177"/>
<dbReference type="eggNOG" id="COG0222">
    <property type="taxonomic scope" value="Bacteria"/>
</dbReference>
<dbReference type="HOGENOM" id="CLU_086499_3_2_10"/>
<dbReference type="OrthoDB" id="9811748at2"/>
<dbReference type="Proteomes" id="UP000001208">
    <property type="component" value="Chromosome"/>
</dbReference>
<dbReference type="GO" id="GO:0022625">
    <property type="term" value="C:cytosolic large ribosomal subunit"/>
    <property type="evidence" value="ECO:0007669"/>
    <property type="project" value="TreeGrafter"/>
</dbReference>
<dbReference type="GO" id="GO:0003729">
    <property type="term" value="F:mRNA binding"/>
    <property type="evidence" value="ECO:0007669"/>
    <property type="project" value="TreeGrafter"/>
</dbReference>
<dbReference type="GO" id="GO:0003735">
    <property type="term" value="F:structural constituent of ribosome"/>
    <property type="evidence" value="ECO:0007669"/>
    <property type="project" value="InterPro"/>
</dbReference>
<dbReference type="GO" id="GO:0006412">
    <property type="term" value="P:translation"/>
    <property type="evidence" value="ECO:0007669"/>
    <property type="project" value="UniProtKB-UniRule"/>
</dbReference>
<dbReference type="CDD" id="cd00387">
    <property type="entry name" value="Ribosomal_L7_L12"/>
    <property type="match status" value="1"/>
</dbReference>
<dbReference type="FunFam" id="3.30.1390.10:FF:000001">
    <property type="entry name" value="50S ribosomal protein L7/L12"/>
    <property type="match status" value="1"/>
</dbReference>
<dbReference type="Gene3D" id="3.30.1390.10">
    <property type="match status" value="1"/>
</dbReference>
<dbReference type="Gene3D" id="1.20.5.710">
    <property type="entry name" value="Single helix bin"/>
    <property type="match status" value="1"/>
</dbReference>
<dbReference type="HAMAP" id="MF_00368">
    <property type="entry name" value="Ribosomal_bL12"/>
    <property type="match status" value="1"/>
</dbReference>
<dbReference type="InterPro" id="IPR000206">
    <property type="entry name" value="Ribosomal_bL12"/>
</dbReference>
<dbReference type="InterPro" id="IPR013823">
    <property type="entry name" value="Ribosomal_bL12_C"/>
</dbReference>
<dbReference type="InterPro" id="IPR014719">
    <property type="entry name" value="Ribosomal_bL12_C/ClpS-like"/>
</dbReference>
<dbReference type="InterPro" id="IPR008932">
    <property type="entry name" value="Ribosomal_bL12_oligo"/>
</dbReference>
<dbReference type="InterPro" id="IPR036235">
    <property type="entry name" value="Ribosomal_bL12_oligo_N_sf"/>
</dbReference>
<dbReference type="NCBIfam" id="TIGR00855">
    <property type="entry name" value="L12"/>
    <property type="match status" value="1"/>
</dbReference>
<dbReference type="PANTHER" id="PTHR45987">
    <property type="entry name" value="39S RIBOSOMAL PROTEIN L12"/>
    <property type="match status" value="1"/>
</dbReference>
<dbReference type="PANTHER" id="PTHR45987:SF4">
    <property type="entry name" value="LARGE RIBOSOMAL SUBUNIT PROTEIN BL12M"/>
    <property type="match status" value="1"/>
</dbReference>
<dbReference type="Pfam" id="PF00542">
    <property type="entry name" value="Ribosomal_L12"/>
    <property type="match status" value="1"/>
</dbReference>
<dbReference type="Pfam" id="PF16320">
    <property type="entry name" value="Ribosomal_L12_N"/>
    <property type="match status" value="1"/>
</dbReference>
<dbReference type="SUPFAM" id="SSF54736">
    <property type="entry name" value="ClpS-like"/>
    <property type="match status" value="1"/>
</dbReference>
<dbReference type="SUPFAM" id="SSF48300">
    <property type="entry name" value="Ribosomal protein L7/12, oligomerisation (N-terminal) domain"/>
    <property type="match status" value="1"/>
</dbReference>
<name>RL7_CHLT3</name>
<accession>B3QYL3</accession>
<sequence>MASIDELVEEIGKLTLTEASELVKALEEKFGVSAAPVMVAGGAMPGAAGAAEAPAEEKTEFDVVLKSAGASKINVIKVVRAATGLGLKEAKAVVDEAPSTVKEAMPKADAEKLVKELKEAGAEAEMK</sequence>
<proteinExistence type="inferred from homology"/>
<evidence type="ECO:0000255" key="1">
    <source>
        <dbReference type="HAMAP-Rule" id="MF_00368"/>
    </source>
</evidence>
<evidence type="ECO:0000305" key="2"/>
<gene>
    <name evidence="1" type="primary">rplL</name>
    <name type="ordered locus">Ctha_1177</name>
</gene>
<protein>
    <recommendedName>
        <fullName evidence="1">Large ribosomal subunit protein bL12</fullName>
    </recommendedName>
    <alternativeName>
        <fullName evidence="2">50S ribosomal protein L7/L12</fullName>
    </alternativeName>
</protein>
<organism>
    <name type="scientific">Chloroherpeton thalassium (strain ATCC 35110 / GB-78)</name>
    <dbReference type="NCBI Taxonomy" id="517418"/>
    <lineage>
        <taxon>Bacteria</taxon>
        <taxon>Pseudomonadati</taxon>
        <taxon>Chlorobiota</taxon>
        <taxon>Chlorobiia</taxon>
        <taxon>Chlorobiales</taxon>
        <taxon>Chloroherpetonaceae</taxon>
        <taxon>Chloroherpeton</taxon>
    </lineage>
</organism>
<feature type="chain" id="PRO_1000121412" description="Large ribosomal subunit protein bL12">
    <location>
        <begin position="1"/>
        <end position="127"/>
    </location>
</feature>
<keyword id="KW-1185">Reference proteome</keyword>
<keyword id="KW-0687">Ribonucleoprotein</keyword>
<keyword id="KW-0689">Ribosomal protein</keyword>